<reference key="1">
    <citation type="journal article" date="1993" name="Nature">
        <title>Potential virulence determinants in terminal regions of variola smallpox virus genome.</title>
        <authorList>
            <person name="Massung R.F."/>
            <person name="Esposito J.J."/>
            <person name="Liu L.I."/>
            <person name="Qi J."/>
            <person name="Utterback T.R."/>
            <person name="Knight J.C."/>
            <person name="Aubin L."/>
            <person name="Yuran T.E."/>
            <person name="Parsons J.M."/>
            <person name="Loparev V.N."/>
            <person name="Selivanov N.A."/>
            <person name="Cavallaro K.F."/>
            <person name="Kerlavage A.R."/>
            <person name="Mahy B.W.J."/>
            <person name="Venter J.C."/>
        </authorList>
    </citation>
    <scope>NUCLEOTIDE SEQUENCE [GENOMIC DNA]</scope>
    <source>
        <strain>Bangladesh-1975</strain>
    </source>
</reference>
<name>PG089_VARV</name>
<evidence type="ECO:0000250" key="1"/>
<evidence type="ECO:0000250" key="2">
    <source>
        <dbReference type="UniProtKB" id="Q80HX0"/>
    </source>
</evidence>
<evidence type="ECO:0000305" key="3"/>
<keyword id="KW-0227">DNA damage</keyword>
<keyword id="KW-0234">DNA repair</keyword>
<keyword id="KW-0244">Early protein</keyword>
<keyword id="KW-0378">Hydrolase</keyword>
<keyword id="KW-0460">Magnesium</keyword>
<keyword id="KW-0479">Metal-binding</keyword>
<keyword id="KW-0540">Nuclease</keyword>
<keyword id="KW-0946">Virion</keyword>
<proteinExistence type="evidence at transcript level"/>
<protein>
    <recommendedName>
        <fullName>Putative nuclease OPG089</fullName>
        <ecNumber evidence="2">3.1.-.-</ecNumber>
    </recommendedName>
    <alternativeName>
        <fullName>Putative nuclease G5</fullName>
    </alternativeName>
</protein>
<organismHost>
    <name type="scientific">Homo sapiens</name>
    <name type="common">Human</name>
    <dbReference type="NCBI Taxonomy" id="9606"/>
</organismHost>
<feature type="chain" id="PRO_0000448193" description="Putative nuclease OPG089">
    <location>
        <begin position="1"/>
        <end position="434"/>
    </location>
</feature>
<feature type="binding site" evidence="1">
    <location>
        <position position="33"/>
    </location>
    <ligand>
        <name>Mg(2+)</name>
        <dbReference type="ChEBI" id="CHEBI:18420"/>
        <label>1</label>
    </ligand>
</feature>
<feature type="binding site" evidence="1">
    <location>
        <position position="74"/>
    </location>
    <ligand>
        <name>Mg(2+)</name>
        <dbReference type="ChEBI" id="CHEBI:18420"/>
        <label>1</label>
    </ligand>
</feature>
<feature type="binding site" evidence="1">
    <location>
        <position position="168"/>
    </location>
    <ligand>
        <name>Mg(2+)</name>
        <dbReference type="ChEBI" id="CHEBI:18420"/>
        <label>1</label>
    </ligand>
</feature>
<feature type="binding site" evidence="1">
    <location>
        <position position="170"/>
    </location>
    <ligand>
        <name>Mg(2+)</name>
        <dbReference type="ChEBI" id="CHEBI:18420"/>
        <label>1</label>
    </ligand>
</feature>
<feature type="binding site" evidence="1">
    <location>
        <position position="196"/>
    </location>
    <ligand>
        <name>Mg(2+)</name>
        <dbReference type="ChEBI" id="CHEBI:18420"/>
        <label>2</label>
    </ligand>
</feature>
<feature type="binding site" evidence="1">
    <location>
        <position position="198"/>
    </location>
    <ligand>
        <name>Mg(2+)</name>
        <dbReference type="ChEBI" id="CHEBI:18420"/>
        <label>2</label>
    </ligand>
</feature>
<sequence>MGIKNLKSLLLENKSLTILDDNLYKVYNGIFVDTMSIYIAVANCVRNLEELTTVFIKYVNGWVKKGGHVTLFIDRGSIKIKQNVRDKRRKYSKSTKDRKMLELEKCTSKIQNVTGFMEEEIKAEIQLKIDKLTFQIYLSDSDNIKISLNEILTHFNNNENVTLFYCDERDAEFVMCLEAKTYFFTTGEWPLIISTDQDTMLFASVDNHPKMIKNLTQLFKFVPSAEDNYLAKLTALVNGCDFFPGLYGASITPTNLNKIQLFSDFTINNIVTSLAIKNYYRKTNSTVDVRNIVTFINDYANLDDVYSYIPPCQCTVQEFIFSALDEKWNDFKSSYLETVPLPCQLMYALEPRKEIDVSEVKTLSSYIDFENTKSDIDVIKSISSIFGYSNENCNTIVFGIYKDNLLLSINSSFYFNNSLLITNTKSDNIINIGY</sequence>
<comment type="function">
    <text evidence="2">Putative nuclease that seems to be required for double-strand break repair, homologous recombination, and production of full-length viral genomic DNA.</text>
</comment>
<comment type="cofactor">
    <cofactor evidence="2">
        <name>Mg(2+)</name>
        <dbReference type="ChEBI" id="CHEBI:18420"/>
    </cofactor>
    <text evidence="1">Binds 2 magnesium ions per subunit. They probably participate in the reaction catalyzed by the enzyme.</text>
</comment>
<comment type="subcellular location">
    <subcellularLocation>
        <location evidence="2">Virion</location>
    </subcellularLocation>
    <text evidence="2">Present in the virion core.</text>
</comment>
<comment type="induction">
    <text>Expressed in the early phase of the viral replicative cycle.</text>
</comment>
<comment type="similarity">
    <text evidence="3">Belongs to the XPG/RAD2 endonuclease family. FEN1 subfamily.</text>
</comment>
<accession>P0DSS6</accession>
<accession>P32995</accession>
<organism>
    <name type="scientific">Variola virus</name>
    <dbReference type="NCBI Taxonomy" id="10255"/>
    <lineage>
        <taxon>Viruses</taxon>
        <taxon>Varidnaviria</taxon>
        <taxon>Bamfordvirae</taxon>
        <taxon>Nucleocytoviricota</taxon>
        <taxon>Pokkesviricetes</taxon>
        <taxon>Chitovirales</taxon>
        <taxon>Poxviridae</taxon>
        <taxon>Chordopoxvirinae</taxon>
        <taxon>Orthopoxvirus</taxon>
    </lineage>
</organism>
<dbReference type="EC" id="3.1.-.-" evidence="2"/>
<dbReference type="EMBL" id="L22579">
    <property type="protein sequence ID" value="AAA60815.1"/>
    <property type="molecule type" value="Genomic_DNA"/>
</dbReference>
<dbReference type="PIR" id="T28505">
    <property type="entry name" value="T28505"/>
</dbReference>
<dbReference type="KEGG" id="vg:1486433"/>
<dbReference type="Proteomes" id="UP000119805">
    <property type="component" value="Segment"/>
</dbReference>
<dbReference type="GO" id="GO:0044423">
    <property type="term" value="C:virion component"/>
    <property type="evidence" value="ECO:0007669"/>
    <property type="project" value="UniProtKB-KW"/>
</dbReference>
<dbReference type="GO" id="GO:0046872">
    <property type="term" value="F:metal ion binding"/>
    <property type="evidence" value="ECO:0007669"/>
    <property type="project" value="UniProtKB-KW"/>
</dbReference>
<dbReference type="GO" id="GO:0004518">
    <property type="term" value="F:nuclease activity"/>
    <property type="evidence" value="ECO:0007669"/>
    <property type="project" value="UniProtKB-KW"/>
</dbReference>
<dbReference type="GO" id="GO:0006281">
    <property type="term" value="P:DNA repair"/>
    <property type="evidence" value="ECO:0007669"/>
    <property type="project" value="UniProtKB-KW"/>
</dbReference>
<dbReference type="CDD" id="cd18674">
    <property type="entry name" value="PIN_Pox_G5"/>
    <property type="match status" value="1"/>
</dbReference>
<dbReference type="InterPro" id="IPR007678">
    <property type="entry name" value="Poxvirus_G5"/>
</dbReference>
<dbReference type="Pfam" id="PF04599">
    <property type="entry name" value="Pox_G5"/>
    <property type="match status" value="1"/>
</dbReference>
<gene>
    <name type="primary">OPG089</name>
    <name type="ORF">G5R</name>
</gene>